<keyword id="KW-0143">Chaperone</keyword>
<keyword id="KW-0963">Cytoplasm</keyword>
<keyword id="KW-1185">Reference proteome</keyword>
<keyword id="KW-0690">Ribosome biogenesis</keyword>
<keyword id="KW-0698">rRNA processing</keyword>
<organism>
    <name type="scientific">Escherichia coli O139:H28 (strain E24377A / ETEC)</name>
    <dbReference type="NCBI Taxonomy" id="331111"/>
    <lineage>
        <taxon>Bacteria</taxon>
        <taxon>Pseudomonadati</taxon>
        <taxon>Pseudomonadota</taxon>
        <taxon>Gammaproteobacteria</taxon>
        <taxon>Enterobacterales</taxon>
        <taxon>Enterobacteriaceae</taxon>
        <taxon>Escherichia</taxon>
    </lineage>
</organism>
<sequence length="182" mass="20605">MSKQLTAQAPVDPIVLGKMGSSYGIRGWLRVFSSTEDAESIFDYQPWFIQKAGQWQQVQLESWKHHNQDMIIKLKGVDDRDAANLLTNCEIVVDSSQLPQLEEGDYYWKDLMGCQVVTTEGYDLGKVVDMMETGSNDVLVIKANLKDAFGIKERLVPFLDGQVIKKVDLTTRSIEVDWDPGF</sequence>
<protein>
    <recommendedName>
        <fullName evidence="1">Ribosome maturation factor RimM</fullName>
    </recommendedName>
</protein>
<reference key="1">
    <citation type="journal article" date="2008" name="J. Bacteriol.">
        <title>The pangenome structure of Escherichia coli: comparative genomic analysis of E. coli commensal and pathogenic isolates.</title>
        <authorList>
            <person name="Rasko D.A."/>
            <person name="Rosovitz M.J."/>
            <person name="Myers G.S.A."/>
            <person name="Mongodin E.F."/>
            <person name="Fricke W.F."/>
            <person name="Gajer P."/>
            <person name="Crabtree J."/>
            <person name="Sebaihia M."/>
            <person name="Thomson N.R."/>
            <person name="Chaudhuri R."/>
            <person name="Henderson I.R."/>
            <person name="Sperandio V."/>
            <person name="Ravel J."/>
        </authorList>
    </citation>
    <scope>NUCLEOTIDE SEQUENCE [LARGE SCALE GENOMIC DNA]</scope>
    <source>
        <strain>E24377A / ETEC</strain>
    </source>
</reference>
<proteinExistence type="inferred from homology"/>
<accession>A7ZQ48</accession>
<gene>
    <name evidence="1" type="primary">rimM</name>
    <name type="ordered locus">EcE24377A_2892</name>
</gene>
<comment type="function">
    <text evidence="1">An accessory protein needed during the final step in the assembly of 30S ribosomal subunit, possibly for assembly of the head region. Essential for efficient processing of 16S rRNA. May be needed both before and after RbfA during the maturation of 16S rRNA. It has affinity for free ribosomal 30S subunits but not for 70S ribosomes.</text>
</comment>
<comment type="subunit">
    <text evidence="1">Binds ribosomal protein uS19.</text>
</comment>
<comment type="subcellular location">
    <subcellularLocation>
        <location evidence="1">Cytoplasm</location>
    </subcellularLocation>
</comment>
<comment type="domain">
    <text evidence="1">The PRC barrel domain binds ribosomal protein uS19.</text>
</comment>
<comment type="similarity">
    <text evidence="1">Belongs to the RimM family.</text>
</comment>
<feature type="chain" id="PRO_1000057116" description="Ribosome maturation factor RimM">
    <location>
        <begin position="1"/>
        <end position="182"/>
    </location>
</feature>
<feature type="domain" description="PRC barrel" evidence="1">
    <location>
        <begin position="103"/>
        <end position="182"/>
    </location>
</feature>
<dbReference type="EMBL" id="CP000800">
    <property type="protein sequence ID" value="ABV16551.1"/>
    <property type="molecule type" value="Genomic_DNA"/>
</dbReference>
<dbReference type="RefSeq" id="WP_000043335.1">
    <property type="nucleotide sequence ID" value="NC_009801.1"/>
</dbReference>
<dbReference type="SMR" id="A7ZQ48"/>
<dbReference type="GeneID" id="93774458"/>
<dbReference type="KEGG" id="ecw:EcE24377A_2892"/>
<dbReference type="HOGENOM" id="CLU_077636_1_0_6"/>
<dbReference type="Proteomes" id="UP000001122">
    <property type="component" value="Chromosome"/>
</dbReference>
<dbReference type="GO" id="GO:0005737">
    <property type="term" value="C:cytoplasm"/>
    <property type="evidence" value="ECO:0007669"/>
    <property type="project" value="UniProtKB-SubCell"/>
</dbReference>
<dbReference type="GO" id="GO:0005840">
    <property type="term" value="C:ribosome"/>
    <property type="evidence" value="ECO:0007669"/>
    <property type="project" value="InterPro"/>
</dbReference>
<dbReference type="GO" id="GO:0043022">
    <property type="term" value="F:ribosome binding"/>
    <property type="evidence" value="ECO:0007669"/>
    <property type="project" value="InterPro"/>
</dbReference>
<dbReference type="GO" id="GO:0042274">
    <property type="term" value="P:ribosomal small subunit biogenesis"/>
    <property type="evidence" value="ECO:0007669"/>
    <property type="project" value="UniProtKB-UniRule"/>
</dbReference>
<dbReference type="GO" id="GO:0006364">
    <property type="term" value="P:rRNA processing"/>
    <property type="evidence" value="ECO:0007669"/>
    <property type="project" value="UniProtKB-UniRule"/>
</dbReference>
<dbReference type="FunFam" id="2.30.30.240:FF:000001">
    <property type="entry name" value="Ribosome maturation factor RimM"/>
    <property type="match status" value="1"/>
</dbReference>
<dbReference type="FunFam" id="2.40.30.60:FF:000001">
    <property type="entry name" value="Ribosome maturation factor RimM"/>
    <property type="match status" value="1"/>
</dbReference>
<dbReference type="Gene3D" id="2.30.30.240">
    <property type="entry name" value="PRC-barrel domain"/>
    <property type="match status" value="1"/>
</dbReference>
<dbReference type="Gene3D" id="2.40.30.60">
    <property type="entry name" value="RimM"/>
    <property type="match status" value="1"/>
</dbReference>
<dbReference type="HAMAP" id="MF_00014">
    <property type="entry name" value="Ribosome_mat_RimM"/>
    <property type="match status" value="1"/>
</dbReference>
<dbReference type="InterPro" id="IPR011033">
    <property type="entry name" value="PRC_barrel-like_sf"/>
</dbReference>
<dbReference type="InterPro" id="IPR056792">
    <property type="entry name" value="PRC_RimM"/>
</dbReference>
<dbReference type="InterPro" id="IPR011961">
    <property type="entry name" value="RimM"/>
</dbReference>
<dbReference type="InterPro" id="IPR002676">
    <property type="entry name" value="RimM_N"/>
</dbReference>
<dbReference type="InterPro" id="IPR036976">
    <property type="entry name" value="RimM_N_sf"/>
</dbReference>
<dbReference type="InterPro" id="IPR009000">
    <property type="entry name" value="Transl_B-barrel_sf"/>
</dbReference>
<dbReference type="NCBIfam" id="TIGR02273">
    <property type="entry name" value="16S_RimM"/>
    <property type="match status" value="1"/>
</dbReference>
<dbReference type="PANTHER" id="PTHR33692">
    <property type="entry name" value="RIBOSOME MATURATION FACTOR RIMM"/>
    <property type="match status" value="1"/>
</dbReference>
<dbReference type="PANTHER" id="PTHR33692:SF1">
    <property type="entry name" value="RIBOSOME MATURATION FACTOR RIMM"/>
    <property type="match status" value="1"/>
</dbReference>
<dbReference type="Pfam" id="PF24986">
    <property type="entry name" value="PRC_RimM"/>
    <property type="match status" value="1"/>
</dbReference>
<dbReference type="Pfam" id="PF01782">
    <property type="entry name" value="RimM"/>
    <property type="match status" value="1"/>
</dbReference>
<dbReference type="SUPFAM" id="SSF50346">
    <property type="entry name" value="PRC-barrel domain"/>
    <property type="match status" value="1"/>
</dbReference>
<dbReference type="SUPFAM" id="SSF50447">
    <property type="entry name" value="Translation proteins"/>
    <property type="match status" value="1"/>
</dbReference>
<evidence type="ECO:0000255" key="1">
    <source>
        <dbReference type="HAMAP-Rule" id="MF_00014"/>
    </source>
</evidence>
<name>RIMM_ECO24</name>